<organism>
    <name type="scientific">Pseudomonas putida (strain GB-1)</name>
    <dbReference type="NCBI Taxonomy" id="76869"/>
    <lineage>
        <taxon>Bacteria</taxon>
        <taxon>Pseudomonadati</taxon>
        <taxon>Pseudomonadota</taxon>
        <taxon>Gammaproteobacteria</taxon>
        <taxon>Pseudomonadales</taxon>
        <taxon>Pseudomonadaceae</taxon>
        <taxon>Pseudomonas</taxon>
    </lineage>
</organism>
<reference key="1">
    <citation type="submission" date="2008-01" db="EMBL/GenBank/DDBJ databases">
        <title>Complete sequence of Pseudomonas putida GB-1.</title>
        <authorList>
            <consortium name="US DOE Joint Genome Institute"/>
            <person name="Copeland A."/>
            <person name="Lucas S."/>
            <person name="Lapidus A."/>
            <person name="Barry K."/>
            <person name="Glavina del Rio T."/>
            <person name="Dalin E."/>
            <person name="Tice H."/>
            <person name="Pitluck S."/>
            <person name="Bruce D."/>
            <person name="Goodwin L."/>
            <person name="Chertkov O."/>
            <person name="Brettin T."/>
            <person name="Detter J.C."/>
            <person name="Han C."/>
            <person name="Kuske C.R."/>
            <person name="Schmutz J."/>
            <person name="Larimer F."/>
            <person name="Land M."/>
            <person name="Hauser L."/>
            <person name="Kyrpides N."/>
            <person name="Kim E."/>
            <person name="McCarthy J.K."/>
            <person name="Richardson P."/>
        </authorList>
    </citation>
    <scope>NUCLEOTIDE SEQUENCE [LARGE SCALE GENOMIC DNA]</scope>
    <source>
        <strain>GB-1</strain>
    </source>
</reference>
<keyword id="KW-0328">Glycosyltransferase</keyword>
<keyword id="KW-0460">Magnesium</keyword>
<keyword id="KW-0665">Pyrimidine biosynthesis</keyword>
<keyword id="KW-0808">Transferase</keyword>
<name>PYRE_PSEPG</name>
<accession>B0KQ92</accession>
<proteinExistence type="inferred from homology"/>
<comment type="function">
    <text evidence="1">Catalyzes the transfer of a ribosyl phosphate group from 5-phosphoribose 1-diphosphate to orotate, leading to the formation of orotidine monophosphate (OMP).</text>
</comment>
<comment type="catalytic activity">
    <reaction evidence="1">
        <text>orotidine 5'-phosphate + diphosphate = orotate + 5-phospho-alpha-D-ribose 1-diphosphate</text>
        <dbReference type="Rhea" id="RHEA:10380"/>
        <dbReference type="ChEBI" id="CHEBI:30839"/>
        <dbReference type="ChEBI" id="CHEBI:33019"/>
        <dbReference type="ChEBI" id="CHEBI:57538"/>
        <dbReference type="ChEBI" id="CHEBI:58017"/>
        <dbReference type="EC" id="2.4.2.10"/>
    </reaction>
</comment>
<comment type="cofactor">
    <cofactor evidence="1">
        <name>Mg(2+)</name>
        <dbReference type="ChEBI" id="CHEBI:18420"/>
    </cofactor>
</comment>
<comment type="pathway">
    <text evidence="1">Pyrimidine metabolism; UMP biosynthesis via de novo pathway; UMP from orotate: step 1/2.</text>
</comment>
<comment type="subunit">
    <text evidence="1">Homodimer.</text>
</comment>
<comment type="similarity">
    <text evidence="1">Belongs to the purine/pyrimidine phosphoribosyltransferase family. PyrE subfamily.</text>
</comment>
<gene>
    <name evidence="1" type="primary">pyrE</name>
    <name type="ordered locus">PputGB1_5340</name>
</gene>
<dbReference type="EC" id="2.4.2.10" evidence="1"/>
<dbReference type="EMBL" id="CP000926">
    <property type="protein sequence ID" value="ABZ01222.1"/>
    <property type="molecule type" value="Genomic_DNA"/>
</dbReference>
<dbReference type="RefSeq" id="WP_003253405.1">
    <property type="nucleotide sequence ID" value="NC_010322.1"/>
</dbReference>
<dbReference type="SMR" id="B0KQ92"/>
<dbReference type="GeneID" id="97170659"/>
<dbReference type="KEGG" id="ppg:PputGB1_5340"/>
<dbReference type="eggNOG" id="COG0461">
    <property type="taxonomic scope" value="Bacteria"/>
</dbReference>
<dbReference type="HOGENOM" id="CLU_074878_0_1_6"/>
<dbReference type="UniPathway" id="UPA00070">
    <property type="reaction ID" value="UER00119"/>
</dbReference>
<dbReference type="Proteomes" id="UP000002157">
    <property type="component" value="Chromosome"/>
</dbReference>
<dbReference type="GO" id="GO:0005737">
    <property type="term" value="C:cytoplasm"/>
    <property type="evidence" value="ECO:0007669"/>
    <property type="project" value="TreeGrafter"/>
</dbReference>
<dbReference type="GO" id="GO:0000287">
    <property type="term" value="F:magnesium ion binding"/>
    <property type="evidence" value="ECO:0007669"/>
    <property type="project" value="UniProtKB-UniRule"/>
</dbReference>
<dbReference type="GO" id="GO:0004588">
    <property type="term" value="F:orotate phosphoribosyltransferase activity"/>
    <property type="evidence" value="ECO:0007669"/>
    <property type="project" value="UniProtKB-UniRule"/>
</dbReference>
<dbReference type="GO" id="GO:0006207">
    <property type="term" value="P:'de novo' pyrimidine nucleobase biosynthetic process"/>
    <property type="evidence" value="ECO:0007669"/>
    <property type="project" value="TreeGrafter"/>
</dbReference>
<dbReference type="GO" id="GO:0044205">
    <property type="term" value="P:'de novo' UMP biosynthetic process"/>
    <property type="evidence" value="ECO:0007669"/>
    <property type="project" value="UniProtKB-UniRule"/>
</dbReference>
<dbReference type="GO" id="GO:0046132">
    <property type="term" value="P:pyrimidine ribonucleoside biosynthetic process"/>
    <property type="evidence" value="ECO:0007669"/>
    <property type="project" value="TreeGrafter"/>
</dbReference>
<dbReference type="CDD" id="cd06223">
    <property type="entry name" value="PRTases_typeI"/>
    <property type="match status" value="1"/>
</dbReference>
<dbReference type="FunFam" id="3.40.50.2020:FF:000008">
    <property type="entry name" value="Orotate phosphoribosyltransferase"/>
    <property type="match status" value="1"/>
</dbReference>
<dbReference type="Gene3D" id="3.40.50.2020">
    <property type="match status" value="1"/>
</dbReference>
<dbReference type="HAMAP" id="MF_01208">
    <property type="entry name" value="PyrE"/>
    <property type="match status" value="1"/>
</dbReference>
<dbReference type="InterPro" id="IPR023031">
    <property type="entry name" value="OPRT"/>
</dbReference>
<dbReference type="InterPro" id="IPR004467">
    <property type="entry name" value="Or_phspho_trans_dom"/>
</dbReference>
<dbReference type="InterPro" id="IPR000836">
    <property type="entry name" value="PRibTrfase_dom"/>
</dbReference>
<dbReference type="InterPro" id="IPR029057">
    <property type="entry name" value="PRTase-like"/>
</dbReference>
<dbReference type="NCBIfam" id="TIGR00336">
    <property type="entry name" value="pyrE"/>
    <property type="match status" value="1"/>
</dbReference>
<dbReference type="PANTHER" id="PTHR46683">
    <property type="entry name" value="OROTATE PHOSPHORIBOSYLTRANSFERASE 1-RELATED"/>
    <property type="match status" value="1"/>
</dbReference>
<dbReference type="PANTHER" id="PTHR46683:SF1">
    <property type="entry name" value="OROTATE PHOSPHORIBOSYLTRANSFERASE 1-RELATED"/>
    <property type="match status" value="1"/>
</dbReference>
<dbReference type="Pfam" id="PF00156">
    <property type="entry name" value="Pribosyltran"/>
    <property type="match status" value="1"/>
</dbReference>
<dbReference type="SUPFAM" id="SSF53271">
    <property type="entry name" value="PRTase-like"/>
    <property type="match status" value="1"/>
</dbReference>
<dbReference type="PROSITE" id="PS00103">
    <property type="entry name" value="PUR_PYR_PR_TRANSFER"/>
    <property type="match status" value="1"/>
</dbReference>
<evidence type="ECO:0000255" key="1">
    <source>
        <dbReference type="HAMAP-Rule" id="MF_01208"/>
    </source>
</evidence>
<feature type="chain" id="PRO_1000085549" description="Orotate phosphoribosyltransferase">
    <location>
        <begin position="1"/>
        <end position="213"/>
    </location>
</feature>
<feature type="binding site" description="in other chain" evidence="1">
    <location>
        <position position="26"/>
    </location>
    <ligand>
        <name>5-phospho-alpha-D-ribose 1-diphosphate</name>
        <dbReference type="ChEBI" id="CHEBI:58017"/>
        <note>ligand shared between dimeric partners</note>
    </ligand>
</feature>
<feature type="binding site" evidence="1">
    <location>
        <begin position="34"/>
        <end position="35"/>
    </location>
    <ligand>
        <name>orotate</name>
        <dbReference type="ChEBI" id="CHEBI:30839"/>
    </ligand>
</feature>
<feature type="binding site" description="in other chain" evidence="1">
    <location>
        <begin position="72"/>
        <end position="73"/>
    </location>
    <ligand>
        <name>5-phospho-alpha-D-ribose 1-diphosphate</name>
        <dbReference type="ChEBI" id="CHEBI:58017"/>
        <note>ligand shared between dimeric partners</note>
    </ligand>
</feature>
<feature type="binding site" evidence="1">
    <location>
        <position position="99"/>
    </location>
    <ligand>
        <name>5-phospho-alpha-D-ribose 1-diphosphate</name>
        <dbReference type="ChEBI" id="CHEBI:58017"/>
        <note>ligand shared between dimeric partners</note>
    </ligand>
</feature>
<feature type="binding site" description="in other chain" evidence="1">
    <location>
        <position position="100"/>
    </location>
    <ligand>
        <name>5-phospho-alpha-D-ribose 1-diphosphate</name>
        <dbReference type="ChEBI" id="CHEBI:58017"/>
        <note>ligand shared between dimeric partners</note>
    </ligand>
</feature>
<feature type="binding site" evidence="1">
    <location>
        <position position="103"/>
    </location>
    <ligand>
        <name>5-phospho-alpha-D-ribose 1-diphosphate</name>
        <dbReference type="ChEBI" id="CHEBI:58017"/>
        <note>ligand shared between dimeric partners</note>
    </ligand>
</feature>
<feature type="binding site" evidence="1">
    <location>
        <position position="105"/>
    </location>
    <ligand>
        <name>5-phospho-alpha-D-ribose 1-diphosphate</name>
        <dbReference type="ChEBI" id="CHEBI:58017"/>
        <note>ligand shared between dimeric partners</note>
    </ligand>
</feature>
<feature type="binding site" description="in other chain" evidence="1">
    <location>
        <begin position="124"/>
        <end position="132"/>
    </location>
    <ligand>
        <name>5-phospho-alpha-D-ribose 1-diphosphate</name>
        <dbReference type="ChEBI" id="CHEBI:58017"/>
        <note>ligand shared between dimeric partners</note>
    </ligand>
</feature>
<feature type="binding site" evidence="1">
    <location>
        <position position="128"/>
    </location>
    <ligand>
        <name>orotate</name>
        <dbReference type="ChEBI" id="CHEBI:30839"/>
    </ligand>
</feature>
<feature type="binding site" evidence="1">
    <location>
        <position position="156"/>
    </location>
    <ligand>
        <name>orotate</name>
        <dbReference type="ChEBI" id="CHEBI:30839"/>
    </ligand>
</feature>
<protein>
    <recommendedName>
        <fullName evidence="1">Orotate phosphoribosyltransferase</fullName>
        <shortName evidence="1">OPRT</shortName>
        <shortName evidence="1">OPRTase</shortName>
        <ecNumber evidence="1">2.4.2.10</ecNumber>
    </recommendedName>
</protein>
<sequence length="213" mass="23079">MQPYQRDFIRFAIDRGVLRFGEFTLKSGRTSPYFFNAGLFNTGSALAELGRCYAAAIVDSKIPFDVLFGPAYKGIPLAATTAVALADQHQLDVPWCFNRKEAKDHGEGGSLVGAPLAGDVLIIDDVITAGTAIREVMQIINAQQAKAAGVLIALNREERGNGELSAIQEVERDFGIPVVSIVSLTQVLEFLADDPQLKQHLPAVEAYRAQYGI</sequence>